<organism>
    <name type="scientific">Homo sapiens</name>
    <name type="common">Human</name>
    <dbReference type="NCBI Taxonomy" id="9606"/>
    <lineage>
        <taxon>Eukaryota</taxon>
        <taxon>Metazoa</taxon>
        <taxon>Chordata</taxon>
        <taxon>Craniata</taxon>
        <taxon>Vertebrata</taxon>
        <taxon>Euteleostomi</taxon>
        <taxon>Mammalia</taxon>
        <taxon>Eutheria</taxon>
        <taxon>Euarchontoglires</taxon>
        <taxon>Primates</taxon>
        <taxon>Haplorrhini</taxon>
        <taxon>Catarrhini</taxon>
        <taxon>Hominidae</taxon>
        <taxon>Homo</taxon>
    </lineage>
</organism>
<accession>Q04941</accession>
<accession>A6NDT7</accession>
<accession>Q32MM8</accession>
<name>PLP2_HUMAN</name>
<gene>
    <name type="primary">PLP2</name>
    <name type="synonym">A4</name>
</gene>
<evidence type="ECO:0000255" key="1"/>
<evidence type="ECO:0000255" key="2">
    <source>
        <dbReference type="PROSITE-ProRule" id="PRU00581"/>
    </source>
</evidence>
<evidence type="ECO:0000303" key="3">
    <source>
    </source>
</evidence>
<sequence length="152" mass="16691">MADSERLSAPGCWAACTNFSRTRKGILLFAEIILCLVILICFSASTPGYSSLSVIEMILAAIFFVVYMCDLHTKIPFINWPWSDFFRTLIAAILYLITSIVVLVERGNHSKIVAGVLGLIATCLFGYDAYVTFPVRQPRHTAAPTDPADGPV</sequence>
<keyword id="KW-0025">Alternative splicing</keyword>
<keyword id="KW-0325">Glycoprotein</keyword>
<keyword id="KW-0472">Membrane</keyword>
<keyword id="KW-1267">Proteomics identification</keyword>
<keyword id="KW-1185">Reference proteome</keyword>
<keyword id="KW-0812">Transmembrane</keyword>
<keyword id="KW-1133">Transmembrane helix</keyword>
<reference key="1">
    <citation type="journal article" date="1993" name="Arch. Biochem. Biophys.">
        <title>Isolation and characterization of a differentiation-dependent gene in the human colonic cell line HT29-18.</title>
        <authorList>
            <person name="Oliva M.M."/>
            <person name="Wu T.-C."/>
            <person name="Yang V.W."/>
        </authorList>
    </citation>
    <scope>NUCLEOTIDE SEQUENCE [MRNA]</scope>
</reference>
<reference key="2">
    <citation type="journal article" date="1997" name="Genomics">
        <title>Sequence-based exon prediction around the synaptophysin locus reveals a gene-rich area containing novel genes in human proximal Xp.</title>
        <authorList>
            <person name="Fisher S.E."/>
            <person name="Ciccodicola A."/>
            <person name="Tanaka K."/>
            <person name="Curci A."/>
            <person name="Desicato S."/>
            <person name="D'Urso M."/>
            <person name="Craig I.W."/>
        </authorList>
    </citation>
    <scope>NUCLEOTIDE SEQUENCE [GENOMIC DNA]</scope>
</reference>
<reference key="3">
    <citation type="journal article" date="2006" name="Genome Res.">
        <title>Diversification of transcriptional modulation: large-scale identification and characterization of putative alternative promoters of human genes.</title>
        <authorList>
            <person name="Kimura K."/>
            <person name="Wakamatsu A."/>
            <person name="Suzuki Y."/>
            <person name="Ota T."/>
            <person name="Nishikawa T."/>
            <person name="Yamashita R."/>
            <person name="Yamamoto J."/>
            <person name="Sekine M."/>
            <person name="Tsuritani K."/>
            <person name="Wakaguri H."/>
            <person name="Ishii S."/>
            <person name="Sugiyama T."/>
            <person name="Saito K."/>
            <person name="Isono Y."/>
            <person name="Irie R."/>
            <person name="Kushida N."/>
            <person name="Yoneyama T."/>
            <person name="Otsuka R."/>
            <person name="Kanda K."/>
            <person name="Yokoi T."/>
            <person name="Kondo H."/>
            <person name="Wagatsuma M."/>
            <person name="Murakawa K."/>
            <person name="Ishida S."/>
            <person name="Ishibashi T."/>
            <person name="Takahashi-Fujii A."/>
            <person name="Tanase T."/>
            <person name="Nagai K."/>
            <person name="Kikuchi H."/>
            <person name="Nakai K."/>
            <person name="Isogai T."/>
            <person name="Sugano S."/>
        </authorList>
    </citation>
    <scope>NUCLEOTIDE SEQUENCE [LARGE SCALE MRNA] (ISOFORM 2)</scope>
    <source>
        <tissue>Thymus</tissue>
    </source>
</reference>
<reference key="4">
    <citation type="journal article" date="2005" name="Nature">
        <title>The DNA sequence of the human X chromosome.</title>
        <authorList>
            <person name="Ross M.T."/>
            <person name="Grafham D.V."/>
            <person name="Coffey A.J."/>
            <person name="Scherer S."/>
            <person name="McLay K."/>
            <person name="Muzny D."/>
            <person name="Platzer M."/>
            <person name="Howell G.R."/>
            <person name="Burrows C."/>
            <person name="Bird C.P."/>
            <person name="Frankish A."/>
            <person name="Lovell F.L."/>
            <person name="Howe K.L."/>
            <person name="Ashurst J.L."/>
            <person name="Fulton R.S."/>
            <person name="Sudbrak R."/>
            <person name="Wen G."/>
            <person name="Jones M.C."/>
            <person name="Hurles M.E."/>
            <person name="Andrews T.D."/>
            <person name="Scott C.E."/>
            <person name="Searle S."/>
            <person name="Ramser J."/>
            <person name="Whittaker A."/>
            <person name="Deadman R."/>
            <person name="Carter N.P."/>
            <person name="Hunt S.E."/>
            <person name="Chen R."/>
            <person name="Cree A."/>
            <person name="Gunaratne P."/>
            <person name="Havlak P."/>
            <person name="Hodgson A."/>
            <person name="Metzker M.L."/>
            <person name="Richards S."/>
            <person name="Scott G."/>
            <person name="Steffen D."/>
            <person name="Sodergren E."/>
            <person name="Wheeler D.A."/>
            <person name="Worley K.C."/>
            <person name="Ainscough R."/>
            <person name="Ambrose K.D."/>
            <person name="Ansari-Lari M.A."/>
            <person name="Aradhya S."/>
            <person name="Ashwell R.I."/>
            <person name="Babbage A.K."/>
            <person name="Bagguley C.L."/>
            <person name="Ballabio A."/>
            <person name="Banerjee R."/>
            <person name="Barker G.E."/>
            <person name="Barlow K.F."/>
            <person name="Barrett I.P."/>
            <person name="Bates K.N."/>
            <person name="Beare D.M."/>
            <person name="Beasley H."/>
            <person name="Beasley O."/>
            <person name="Beck A."/>
            <person name="Bethel G."/>
            <person name="Blechschmidt K."/>
            <person name="Brady N."/>
            <person name="Bray-Allen S."/>
            <person name="Bridgeman A.M."/>
            <person name="Brown A.J."/>
            <person name="Brown M.J."/>
            <person name="Bonnin D."/>
            <person name="Bruford E.A."/>
            <person name="Buhay C."/>
            <person name="Burch P."/>
            <person name="Burford D."/>
            <person name="Burgess J."/>
            <person name="Burrill W."/>
            <person name="Burton J."/>
            <person name="Bye J.M."/>
            <person name="Carder C."/>
            <person name="Carrel L."/>
            <person name="Chako J."/>
            <person name="Chapman J.C."/>
            <person name="Chavez D."/>
            <person name="Chen E."/>
            <person name="Chen G."/>
            <person name="Chen Y."/>
            <person name="Chen Z."/>
            <person name="Chinault C."/>
            <person name="Ciccodicola A."/>
            <person name="Clark S.Y."/>
            <person name="Clarke G."/>
            <person name="Clee C.M."/>
            <person name="Clegg S."/>
            <person name="Clerc-Blankenburg K."/>
            <person name="Clifford K."/>
            <person name="Cobley V."/>
            <person name="Cole C.G."/>
            <person name="Conquer J.S."/>
            <person name="Corby N."/>
            <person name="Connor R.E."/>
            <person name="David R."/>
            <person name="Davies J."/>
            <person name="Davis C."/>
            <person name="Davis J."/>
            <person name="Delgado O."/>
            <person name="Deshazo D."/>
            <person name="Dhami P."/>
            <person name="Ding Y."/>
            <person name="Dinh H."/>
            <person name="Dodsworth S."/>
            <person name="Draper H."/>
            <person name="Dugan-Rocha S."/>
            <person name="Dunham A."/>
            <person name="Dunn M."/>
            <person name="Durbin K.J."/>
            <person name="Dutta I."/>
            <person name="Eades T."/>
            <person name="Ellwood M."/>
            <person name="Emery-Cohen A."/>
            <person name="Errington H."/>
            <person name="Evans K.L."/>
            <person name="Faulkner L."/>
            <person name="Francis F."/>
            <person name="Frankland J."/>
            <person name="Fraser A.E."/>
            <person name="Galgoczy P."/>
            <person name="Gilbert J."/>
            <person name="Gill R."/>
            <person name="Gloeckner G."/>
            <person name="Gregory S.G."/>
            <person name="Gribble S."/>
            <person name="Griffiths C."/>
            <person name="Grocock R."/>
            <person name="Gu Y."/>
            <person name="Gwilliam R."/>
            <person name="Hamilton C."/>
            <person name="Hart E.A."/>
            <person name="Hawes A."/>
            <person name="Heath P.D."/>
            <person name="Heitmann K."/>
            <person name="Hennig S."/>
            <person name="Hernandez J."/>
            <person name="Hinzmann B."/>
            <person name="Ho S."/>
            <person name="Hoffs M."/>
            <person name="Howden P.J."/>
            <person name="Huckle E.J."/>
            <person name="Hume J."/>
            <person name="Hunt P.J."/>
            <person name="Hunt A.R."/>
            <person name="Isherwood J."/>
            <person name="Jacob L."/>
            <person name="Johnson D."/>
            <person name="Jones S."/>
            <person name="de Jong P.J."/>
            <person name="Joseph S.S."/>
            <person name="Keenan S."/>
            <person name="Kelly S."/>
            <person name="Kershaw J.K."/>
            <person name="Khan Z."/>
            <person name="Kioschis P."/>
            <person name="Klages S."/>
            <person name="Knights A.J."/>
            <person name="Kosiura A."/>
            <person name="Kovar-Smith C."/>
            <person name="Laird G.K."/>
            <person name="Langford C."/>
            <person name="Lawlor S."/>
            <person name="Leversha M."/>
            <person name="Lewis L."/>
            <person name="Liu W."/>
            <person name="Lloyd C."/>
            <person name="Lloyd D.M."/>
            <person name="Loulseged H."/>
            <person name="Loveland J.E."/>
            <person name="Lovell J.D."/>
            <person name="Lozado R."/>
            <person name="Lu J."/>
            <person name="Lyne R."/>
            <person name="Ma J."/>
            <person name="Maheshwari M."/>
            <person name="Matthews L.H."/>
            <person name="McDowall J."/>
            <person name="McLaren S."/>
            <person name="McMurray A."/>
            <person name="Meidl P."/>
            <person name="Meitinger T."/>
            <person name="Milne S."/>
            <person name="Miner G."/>
            <person name="Mistry S.L."/>
            <person name="Morgan M."/>
            <person name="Morris S."/>
            <person name="Mueller I."/>
            <person name="Mullikin J.C."/>
            <person name="Nguyen N."/>
            <person name="Nordsiek G."/>
            <person name="Nyakatura G."/>
            <person name="O'dell C.N."/>
            <person name="Okwuonu G."/>
            <person name="Palmer S."/>
            <person name="Pandian R."/>
            <person name="Parker D."/>
            <person name="Parrish J."/>
            <person name="Pasternak S."/>
            <person name="Patel D."/>
            <person name="Pearce A.V."/>
            <person name="Pearson D.M."/>
            <person name="Pelan S.E."/>
            <person name="Perez L."/>
            <person name="Porter K.M."/>
            <person name="Ramsey Y."/>
            <person name="Reichwald K."/>
            <person name="Rhodes S."/>
            <person name="Ridler K.A."/>
            <person name="Schlessinger D."/>
            <person name="Schueler M.G."/>
            <person name="Sehra H.K."/>
            <person name="Shaw-Smith C."/>
            <person name="Shen H."/>
            <person name="Sheridan E.M."/>
            <person name="Shownkeen R."/>
            <person name="Skuce C.D."/>
            <person name="Smith M.L."/>
            <person name="Sotheran E.C."/>
            <person name="Steingruber H.E."/>
            <person name="Steward C.A."/>
            <person name="Storey R."/>
            <person name="Swann R.M."/>
            <person name="Swarbreck D."/>
            <person name="Tabor P.E."/>
            <person name="Taudien S."/>
            <person name="Taylor T."/>
            <person name="Teague B."/>
            <person name="Thomas K."/>
            <person name="Thorpe A."/>
            <person name="Timms K."/>
            <person name="Tracey A."/>
            <person name="Trevanion S."/>
            <person name="Tromans A.C."/>
            <person name="d'Urso M."/>
            <person name="Verduzco D."/>
            <person name="Villasana D."/>
            <person name="Waldron L."/>
            <person name="Wall M."/>
            <person name="Wang Q."/>
            <person name="Warren J."/>
            <person name="Warry G.L."/>
            <person name="Wei X."/>
            <person name="West A."/>
            <person name="Whitehead S.L."/>
            <person name="Whiteley M.N."/>
            <person name="Wilkinson J.E."/>
            <person name="Willey D.L."/>
            <person name="Williams G."/>
            <person name="Williams L."/>
            <person name="Williamson A."/>
            <person name="Williamson H."/>
            <person name="Wilming L."/>
            <person name="Woodmansey R.L."/>
            <person name="Wray P.W."/>
            <person name="Yen J."/>
            <person name="Zhang J."/>
            <person name="Zhou J."/>
            <person name="Zoghbi H."/>
            <person name="Zorilla S."/>
            <person name="Buck D."/>
            <person name="Reinhardt R."/>
            <person name="Poustka A."/>
            <person name="Rosenthal A."/>
            <person name="Lehrach H."/>
            <person name="Meindl A."/>
            <person name="Minx P.J."/>
            <person name="Hillier L.W."/>
            <person name="Willard H.F."/>
            <person name="Wilson R.K."/>
            <person name="Waterston R.H."/>
            <person name="Rice C.M."/>
            <person name="Vaudin M."/>
            <person name="Coulson A."/>
            <person name="Nelson D.L."/>
            <person name="Weinstock G."/>
            <person name="Sulston J.E."/>
            <person name="Durbin R.M."/>
            <person name="Hubbard T."/>
            <person name="Gibbs R.A."/>
            <person name="Beck S."/>
            <person name="Rogers J."/>
            <person name="Bentley D.R."/>
        </authorList>
    </citation>
    <scope>NUCLEOTIDE SEQUENCE [LARGE SCALE GENOMIC DNA]</scope>
</reference>
<reference key="5">
    <citation type="journal article" date="2004" name="Genome Res.">
        <title>The status, quality, and expansion of the NIH full-length cDNA project: the Mammalian Gene Collection (MGC).</title>
        <authorList>
            <consortium name="The MGC Project Team"/>
        </authorList>
    </citation>
    <scope>NUCLEOTIDE SEQUENCE [LARGE SCALE MRNA]</scope>
</reference>
<reference key="6">
    <citation type="journal article" date="2011" name="BMC Syst. Biol.">
        <title>Initial characterization of the human central proteome.</title>
        <authorList>
            <person name="Burkard T.R."/>
            <person name="Planyavsky M."/>
            <person name="Kaupe I."/>
            <person name="Breitwieser F.P."/>
            <person name="Buerckstuemmer T."/>
            <person name="Bennett K.L."/>
            <person name="Superti-Furga G."/>
            <person name="Colinge J."/>
        </authorList>
    </citation>
    <scope>IDENTIFICATION BY MASS SPECTROMETRY [LARGE SCALE ANALYSIS]</scope>
</reference>
<reference key="7">
    <citation type="journal article" date="2015" name="Proteomics">
        <title>N-terminome analysis of the human mitochondrial proteome.</title>
        <authorList>
            <person name="Vaca Jacome A.S."/>
            <person name="Rabilloud T."/>
            <person name="Schaeffer-Reiss C."/>
            <person name="Rompais M."/>
            <person name="Ayoub D."/>
            <person name="Lane L."/>
            <person name="Bairoch A."/>
            <person name="Van Dorsselaer A."/>
            <person name="Carapito C."/>
        </authorList>
    </citation>
    <scope>IDENTIFICATION BY MASS SPECTROMETRY [LARGE SCALE ANALYSIS]</scope>
</reference>
<comment type="function">
    <text>May play a role in cell differentiation in the intestinal epithelium.</text>
</comment>
<comment type="interaction">
    <interactant intactId="EBI-608347">
        <id>Q04941</id>
    </interactant>
    <interactant intactId="EBI-2808854">
        <id>Q92482</id>
        <label>AQP3</label>
    </interactant>
    <organismsDiffer>false</organismsDiffer>
    <experiments>3</experiments>
</comment>
<comment type="interaction">
    <interactant intactId="EBI-608347">
        <id>Q04941</id>
    </interactant>
    <interactant intactId="EBI-19124986">
        <id>O94778</id>
        <label>AQP8</label>
    </interactant>
    <organismsDiffer>false</organismsDiffer>
    <experiments>3</experiments>
</comment>
<comment type="interaction">
    <interactant intactId="EBI-608347">
        <id>Q04941</id>
    </interactant>
    <interactant intactId="EBI-638194">
        <id>P53365</id>
        <label>ARFIP2</label>
    </interactant>
    <organismsDiffer>false</organismsDiffer>
    <experiments>5</experiments>
</comment>
<comment type="interaction">
    <interactant intactId="EBI-608347">
        <id>Q04941</id>
    </interactant>
    <interactant intactId="EBI-12808270">
        <id>P07307-3</id>
        <label>ASGR2</label>
    </interactant>
    <organismsDiffer>false</organismsDiffer>
    <experiments>3</experiments>
</comment>
<comment type="interaction">
    <interactant intactId="EBI-608347">
        <id>Q04941</id>
    </interactant>
    <interactant intactId="EBI-2606700">
        <id>P18859</id>
        <label>ATP5PF</label>
    </interactant>
    <organismsDiffer>false</organismsDiffer>
    <experiments>3</experiments>
</comment>
<comment type="interaction">
    <interactant intactId="EBI-608347">
        <id>Q04941</id>
    </interactant>
    <interactant intactId="EBI-700794">
        <id>Q13323</id>
        <label>BIK</label>
    </interactant>
    <organismsDiffer>false</organismsDiffer>
    <experiments>3</experiments>
</comment>
<comment type="interaction">
    <interactant intactId="EBI-608347">
        <id>Q04941</id>
    </interactant>
    <interactant intactId="EBI-749464">
        <id>Q12983</id>
        <label>BNIP3</label>
    </interactant>
    <organismsDiffer>false</organismsDiffer>
    <experiments>3</experiments>
</comment>
<comment type="interaction">
    <interactant intactId="EBI-608347">
        <id>Q04941</id>
    </interactant>
    <interactant intactId="EBI-608322">
        <id>P32246</id>
        <label>CCR1</label>
    </interactant>
    <organismsDiffer>false</organismsDiffer>
    <experiments>4</experiments>
</comment>
<comment type="interaction">
    <interactant intactId="EBI-608347">
        <id>Q04941</id>
    </interactant>
    <interactant intactId="EBI-6657396">
        <id>P19397</id>
        <label>CD53</label>
    </interactant>
    <organismsDiffer>false</organismsDiffer>
    <experiments>3</experiments>
</comment>
<comment type="interaction">
    <interactant intactId="EBI-608347">
        <id>Q04941</id>
    </interactant>
    <interactant intactId="EBI-7797864">
        <id>P11912</id>
        <label>CD79A</label>
    </interactant>
    <organismsDiffer>false</organismsDiffer>
    <experiments>3</experiments>
</comment>
<comment type="interaction">
    <interactant intactId="EBI-608347">
        <id>Q04941</id>
    </interactant>
    <interactant intactId="EBI-2622997">
        <id>Q9HA82</id>
        <label>CERS4</label>
    </interactant>
    <organismsDiffer>false</organismsDiffer>
    <experiments>3</experiments>
</comment>
<comment type="interaction">
    <interactant intactId="EBI-608347">
        <id>Q04941</id>
    </interactant>
    <interactant intactId="EBI-752069">
        <id>Q9H5X1</id>
        <label>CIAO2A</label>
    </interactant>
    <organismsDiffer>false</organismsDiffer>
    <experiments>3</experiments>
</comment>
<comment type="interaction">
    <interactant intactId="EBI-608347">
        <id>Q04941</id>
    </interactant>
    <interactant intactId="EBI-18400628">
        <id>O00501</id>
        <label>CLDN5</label>
    </interactant>
    <organismsDiffer>false</organismsDiffer>
    <experiments>3</experiments>
</comment>
<comment type="interaction">
    <interactant intactId="EBI-608347">
        <id>Q04941</id>
    </interactant>
    <interactant intactId="EBI-18013275">
        <id>Q7Z7G2</id>
        <label>CPLX4</label>
    </interactant>
    <organismsDiffer>false</organismsDiffer>
    <experiments>3</experiments>
</comment>
<comment type="interaction">
    <interactant intactId="EBI-608347">
        <id>Q04941</id>
    </interactant>
    <interactant intactId="EBI-17233035">
        <id>Q9BUF7-2</id>
        <label>CRB3</label>
    </interactant>
    <organismsDiffer>false</organismsDiffer>
    <experiments>3</experiments>
</comment>
<comment type="interaction">
    <interactant intactId="EBI-608347">
        <id>Q04941</id>
    </interactant>
    <interactant intactId="EBI-6942903">
        <id>Q96BA8</id>
        <label>CREB3L1</label>
    </interactant>
    <organismsDiffer>false</organismsDiffer>
    <experiments>3</experiments>
</comment>
<comment type="interaction">
    <interactant intactId="EBI-608347">
        <id>Q04941</id>
    </interactant>
    <interactant intactId="EBI-8646596">
        <id>P49447</id>
        <label>CYB561</label>
    </interactant>
    <organismsDiffer>false</organismsDiffer>
    <experiments>3</experiments>
</comment>
<comment type="interaction">
    <interactant intactId="EBI-608347">
        <id>Q04941</id>
    </interactant>
    <interactant intactId="EBI-2680384">
        <id>Q9BQA9</id>
        <label>CYBC1</label>
    </interactant>
    <organismsDiffer>false</organismsDiffer>
    <experiments>3</experiments>
</comment>
<comment type="interaction">
    <interactant intactId="EBI-608347">
        <id>Q04941</id>
    </interactant>
    <interactant intactId="EBI-8637742">
        <id>Q53TN4</id>
        <label>CYBRD1</label>
    </interactant>
    <organismsDiffer>false</organismsDiffer>
    <experiments>3</experiments>
</comment>
<comment type="interaction">
    <interactant intactId="EBI-608347">
        <id>Q04941</id>
    </interactant>
    <interactant intactId="EBI-3917045">
        <id>Q6PI48</id>
        <label>DARS2</label>
    </interactant>
    <organismsDiffer>false</organismsDiffer>
    <experiments>3</experiments>
</comment>
<comment type="interaction">
    <interactant intactId="EBI-608347">
        <id>Q04941</id>
    </interactant>
    <interactant intactId="EBI-296550">
        <id>Q96KC8</id>
        <label>DNAJC1</label>
    </interactant>
    <organismsDiffer>false</organismsDiffer>
    <experiments>3</experiments>
</comment>
<comment type="interaction">
    <interactant intactId="EBI-608347">
        <id>Q04941</id>
    </interactant>
    <interactant intactId="EBI-3915253">
        <id>Q15125</id>
        <label>EBP</label>
    </interactant>
    <organismsDiffer>false</organismsDiffer>
    <experiments>3</experiments>
</comment>
<comment type="interaction">
    <interactant intactId="EBI-608347">
        <id>Q04941</id>
    </interactant>
    <interactant intactId="EBI-11037623">
        <id>Q9NYP7</id>
        <label>ELOVL5</label>
    </interactant>
    <organismsDiffer>false</organismsDiffer>
    <experiments>3</experiments>
</comment>
<comment type="interaction">
    <interactant intactId="EBI-608347">
        <id>Q04941</id>
    </interactant>
    <interactant intactId="EBI-3907816">
        <id>P54852</id>
        <label>EMP3</label>
    </interactant>
    <organismsDiffer>false</organismsDiffer>
    <experiments>3</experiments>
</comment>
<comment type="interaction">
    <interactant intactId="EBI-608347">
        <id>Q04941</id>
    </interactant>
    <interactant intactId="EBI-2870359">
        <id>P22794</id>
        <label>EVI2A</label>
    </interactant>
    <organismsDiffer>false</organismsDiffer>
    <experiments>3</experiments>
</comment>
<comment type="interaction">
    <interactant intactId="EBI-608347">
        <id>Q04941</id>
    </interactant>
    <interactant intactId="EBI-18304435">
        <id>Q5JX71</id>
        <label>FAM209A</label>
    </interactant>
    <organismsDiffer>false</organismsDiffer>
    <experiments>3</experiments>
</comment>
<comment type="interaction">
    <interactant intactId="EBI-608347">
        <id>Q04941</id>
    </interactant>
    <interactant intactId="EBI-18938272">
        <id>Q96KR6</id>
        <label>FAM210B</label>
    </interactant>
    <organismsDiffer>false</organismsDiffer>
    <experiments>3</experiments>
</comment>
<comment type="interaction">
    <interactant intactId="EBI-608347">
        <id>Q04941</id>
    </interactant>
    <interactant intactId="EBI-743099">
        <id>Q969F0</id>
        <label>FATE1</label>
    </interactant>
    <organismsDiffer>false</organismsDiffer>
    <experiments>3</experiments>
</comment>
<comment type="interaction">
    <interactant intactId="EBI-608347">
        <id>Q04941</id>
    </interactant>
    <interactant intactId="EBI-12142257">
        <id>Q8TBE3</id>
        <label>FNDC9</label>
    </interactant>
    <organismsDiffer>false</organismsDiffer>
    <experiments>3</experiments>
</comment>
<comment type="interaction">
    <interactant intactId="EBI-608347">
        <id>Q04941</id>
    </interactant>
    <interactant intactId="EBI-11955647">
        <id>Q8TDV0</id>
        <label>GPR151</label>
    </interactant>
    <organismsDiffer>false</organismsDiffer>
    <experiments>3</experiments>
</comment>
<comment type="interaction">
    <interactant intactId="EBI-608347">
        <id>Q04941</id>
    </interactant>
    <interactant intactId="EBI-11721746">
        <id>Q8TED1</id>
        <label>GPX8</label>
    </interactant>
    <organismsDiffer>false</organismsDiffer>
    <experiments>3</experiments>
</comment>
<comment type="interaction">
    <interactant intactId="EBI-608347">
        <id>Q04941</id>
    </interactant>
    <interactant intactId="EBI-2685549">
        <id>C9JCN9</id>
        <label>HSBP1L1</label>
    </interactant>
    <organismsDiffer>false</organismsDiffer>
    <experiments>3</experiments>
</comment>
<comment type="interaction">
    <interactant intactId="EBI-608347">
        <id>Q04941</id>
    </interactant>
    <interactant intactId="EBI-1052304">
        <id>Q8NBQ5</id>
        <label>HSD17B11</label>
    </interactant>
    <organismsDiffer>false</organismsDiffer>
    <experiments>3</experiments>
</comment>
<comment type="interaction">
    <interactant intactId="EBI-608347">
        <id>Q04941</id>
    </interactant>
    <interactant intactId="EBI-18053395">
        <id>Q7Z5P4</id>
        <label>HSD17B13</label>
    </interactant>
    <organismsDiffer>false</organismsDiffer>
    <experiments>3</experiments>
</comment>
<comment type="interaction">
    <interactant intactId="EBI-608347">
        <id>Q04941</id>
    </interactant>
    <interactant intactId="EBI-749265">
        <id>Q8N6L0</id>
        <label>KASH5</label>
    </interactant>
    <organismsDiffer>false</organismsDiffer>
    <experiments>3</experiments>
</comment>
<comment type="interaction">
    <interactant intactId="EBI-608347">
        <id>Q04941</id>
    </interactant>
    <interactant intactId="EBI-18268016">
        <id>Q86WI0</id>
        <label>LHFPL1</label>
    </interactant>
    <organismsDiffer>false</organismsDiffer>
    <experiments>3</experiments>
</comment>
<comment type="interaction">
    <interactant intactId="EBI-608347">
        <id>Q04941</id>
    </interactant>
    <interactant intactId="EBI-2820517">
        <id>Q8TAF8</id>
        <label>LHFPL5</label>
    </interactant>
    <organismsDiffer>false</organismsDiffer>
    <experiments>3</experiments>
</comment>
<comment type="interaction">
    <interactant intactId="EBI-608347">
        <id>Q04941</id>
    </interactant>
    <interactant intactId="EBI-3925442">
        <id>Q9HCJ2</id>
        <label>LRRC4C</label>
    </interactant>
    <organismsDiffer>false</organismsDiffer>
    <experiments>3</experiments>
</comment>
<comment type="interaction">
    <interactant intactId="EBI-608347">
        <id>Q04941</id>
    </interactant>
    <interactant intactId="EBI-724754">
        <id>O14880</id>
        <label>MGST3</label>
    </interactant>
    <organismsDiffer>false</organismsDiffer>
    <experiments>3</experiments>
</comment>
<comment type="interaction">
    <interactant intactId="EBI-608347">
        <id>Q04941</id>
    </interactant>
    <interactant intactId="EBI-11978907">
        <id>Q9ULP0-2</id>
        <label>NDRG4</label>
    </interactant>
    <organismsDiffer>false</organismsDiffer>
    <experiments>3</experiments>
</comment>
<comment type="interaction">
    <interactant intactId="EBI-608347">
        <id>Q04941</id>
    </interactant>
    <interactant intactId="EBI-4319734">
        <id>Q9H813</id>
        <label>PACC1</label>
    </interactant>
    <organismsDiffer>false</organismsDiffer>
    <experiments>5</experiments>
</comment>
<comment type="interaction">
    <interactant intactId="EBI-608347">
        <id>Q04941</id>
    </interactant>
    <interactant intactId="EBI-716063">
        <id>Q13113</id>
        <label>PDZK1IP1</label>
    </interactant>
    <organismsDiffer>false</organismsDiffer>
    <experiments>3</experiments>
</comment>
<comment type="interaction">
    <interactant intactId="EBI-608347">
        <id>Q04941</id>
    </interactant>
    <interactant intactId="EBI-17630288">
        <id>P57054</id>
        <label>PIGP</label>
    </interactant>
    <organismsDiffer>false</organismsDiffer>
    <experiments>3</experiments>
</comment>
<comment type="interaction">
    <interactant intactId="EBI-608347">
        <id>Q04941</id>
    </interactant>
    <interactant intactId="EBI-11161398">
        <id>O14684</id>
        <label>PTGES</label>
    </interactant>
    <organismsDiffer>false</organismsDiffer>
    <experiments>3</experiments>
</comment>
<comment type="interaction">
    <interactant intactId="EBI-608347">
        <id>Q04941</id>
    </interactant>
    <interactant intactId="EBI-3919694">
        <id>P15151</id>
        <label>PVR</label>
    </interactant>
    <organismsDiffer>false</organismsDiffer>
    <experiments>3</experiments>
</comment>
<comment type="interaction">
    <interactant intactId="EBI-608347">
        <id>Q04941</id>
    </interactant>
    <interactant intactId="EBI-7545592">
        <id>Q9H6H4</id>
        <label>REEP4</label>
    </interactant>
    <organismsDiffer>false</organismsDiffer>
    <experiments>3</experiments>
</comment>
<comment type="interaction">
    <interactant intactId="EBI-608347">
        <id>Q04941</id>
    </interactant>
    <interactant intactId="EBI-10192441">
        <id>Q86VR2</id>
        <label>RETREG3</label>
    </interactant>
    <organismsDiffer>false</organismsDiffer>
    <experiments>3</experiments>
</comment>
<comment type="interaction">
    <interactant intactId="EBI-608347">
        <id>Q04941</id>
    </interactant>
    <interactant intactId="EBI-348482">
        <id>Q99942</id>
        <label>RNF5</label>
    </interactant>
    <organismsDiffer>false</organismsDiffer>
    <experiments>3</experiments>
</comment>
<comment type="interaction">
    <interactant intactId="EBI-608347">
        <id>Q04941</id>
    </interactant>
    <interactant intactId="EBI-3920694">
        <id>Q9NR31</id>
        <label>SAR1A</label>
    </interactant>
    <organismsDiffer>false</organismsDiffer>
    <experiments>3</experiments>
</comment>
<comment type="interaction">
    <interactant intactId="EBI-608347">
        <id>Q04941</id>
    </interactant>
    <interactant intactId="EBI-17247926">
        <id>Q9NY72</id>
        <label>SCN3B</label>
    </interactant>
    <organismsDiffer>false</organismsDiffer>
    <experiments>3</experiments>
</comment>
<comment type="interaction">
    <interactant intactId="EBI-608347">
        <id>Q04941</id>
    </interactant>
    <interactant intactId="EBI-1046170">
        <id>O95470</id>
        <label>SGPL1</label>
    </interactant>
    <organismsDiffer>false</organismsDiffer>
    <experiments>3</experiments>
</comment>
<comment type="interaction">
    <interactant intactId="EBI-608347">
        <id>Q04941</id>
    </interactant>
    <interactant intactId="EBI-1573290">
        <id>Q15849</id>
        <label>SLC14A2</label>
    </interactant>
    <organismsDiffer>false</organismsDiffer>
    <experiments>3</experiments>
</comment>
<comment type="interaction">
    <interactant intactId="EBI-608347">
        <id>Q04941</id>
    </interactant>
    <interactant intactId="EBI-17595455">
        <id>P54219-3</id>
        <label>SLC18A1</label>
    </interactant>
    <organismsDiffer>false</organismsDiffer>
    <experiments>3</experiments>
</comment>
<comment type="interaction">
    <interactant intactId="EBI-608347">
        <id>Q04941</id>
    </interactant>
    <interactant intactId="EBI-18082698">
        <id>Q96QE2</id>
        <label>SLC2A13</label>
    </interactant>
    <organismsDiffer>false</organismsDiffer>
    <experiments>3</experiments>
</comment>
<comment type="interaction">
    <interactant intactId="EBI-608347">
        <id>Q04941</id>
    </interactant>
    <interactant intactId="EBI-17295964">
        <id>Q9NQQ7-3</id>
        <label>SLC35C2</label>
    </interactant>
    <organismsDiffer>false</organismsDiffer>
    <experiments>3</experiments>
</comment>
<comment type="interaction">
    <interactant intactId="EBI-608347">
        <id>Q04941</id>
    </interactant>
    <interactant intactId="EBI-742688">
        <id>Q9NZD8</id>
        <label>SPG21</label>
    </interactant>
    <organismsDiffer>false</organismsDiffer>
    <experiments>3</experiments>
</comment>
<comment type="interaction">
    <interactant intactId="EBI-608347">
        <id>Q04941</id>
    </interactant>
    <interactant intactId="EBI-10049055">
        <id>P16150</id>
        <label>SPN</label>
    </interactant>
    <organismsDiffer>false</organismsDiffer>
    <experiments>3</experiments>
</comment>
<comment type="interaction">
    <interactant intactId="EBI-608347">
        <id>Q04941</id>
    </interactant>
    <interactant intactId="EBI-726691">
        <id>Q8WY91</id>
        <label>THAP4</label>
    </interactant>
    <organismsDiffer>false</organismsDiffer>
    <experiments>3</experiments>
</comment>
<comment type="interaction">
    <interactant intactId="EBI-608347">
        <id>Q04941</id>
    </interactant>
    <interactant intactId="EBI-6448756">
        <id>Q96DZ7</id>
        <label>TM4SF19</label>
    </interactant>
    <organismsDiffer>false</organismsDiffer>
    <experiments>3</experiments>
</comment>
<comment type="interaction">
    <interactant intactId="EBI-608347">
        <id>Q04941</id>
    </interactant>
    <interactant intactId="EBI-8638294">
        <id>Q9NUH8</id>
        <label>TMEM14B</label>
    </interactant>
    <organismsDiffer>false</organismsDiffer>
    <experiments>3</experiments>
</comment>
<comment type="interaction">
    <interactant intactId="EBI-608347">
        <id>Q04941</id>
    </interactant>
    <interactant intactId="EBI-726044">
        <id>Q9NW97</id>
        <label>TMEM51</label>
    </interactant>
    <organismsDiffer>false</organismsDiffer>
    <experiments>3</experiments>
</comment>
<comment type="interaction">
    <interactant intactId="EBI-608347">
        <id>Q04941</id>
    </interactant>
    <interactant intactId="EBI-8649725">
        <id>Q9BSE2</id>
        <label>TMEM79</label>
    </interactant>
    <organismsDiffer>false</organismsDiffer>
    <experiments>4</experiments>
</comment>
<comment type="interaction">
    <interactant intactId="EBI-608347">
        <id>Q04941</id>
    </interactant>
    <interactant intactId="EBI-12345267">
        <id>O15393-2</id>
        <label>TMPRSS2</label>
    </interactant>
    <organismsDiffer>false</organismsDiffer>
    <experiments>4</experiments>
</comment>
<comment type="interaction">
    <interactant intactId="EBI-608347">
        <id>Q04941</id>
    </interactant>
    <interactant intactId="EBI-6447886">
        <id>Q9Y320</id>
        <label>TMX2</label>
    </interactant>
    <organismsDiffer>false</organismsDiffer>
    <experiments>3</experiments>
</comment>
<comment type="subcellular location">
    <subcellularLocation>
        <location>Membrane</location>
        <topology>Multi-pass membrane protein</topology>
    </subcellularLocation>
</comment>
<comment type="alternative products">
    <event type="alternative splicing"/>
    <isoform>
        <id>Q04941-1</id>
        <name>1</name>
        <sequence type="displayed"/>
    </isoform>
    <isoform>
        <id>Q04941-2</id>
        <name>2</name>
        <sequence type="described" ref="VSP_041602"/>
    </isoform>
</comment>
<comment type="tissue specificity">
    <text>Enriched in colonic mucosa. The expression of A4 follows a gradient along the crypto-villus axis with the most abundant message occurring in the lower half of the crypt.</text>
</comment>
<protein>
    <recommendedName>
        <fullName>Proteolipid protein 2</fullName>
    </recommendedName>
    <alternativeName>
        <fullName>Differentiation-dependent protein A4</fullName>
    </alternativeName>
    <alternativeName>
        <fullName>Intestinal membrane A4 protein</fullName>
    </alternativeName>
</protein>
<dbReference type="EMBL" id="L09604">
    <property type="protein sequence ID" value="AAA35499.1"/>
    <property type="molecule type" value="mRNA"/>
</dbReference>
<dbReference type="EMBL" id="U93305">
    <property type="protein sequence ID" value="AAB92356.1"/>
    <property type="molecule type" value="Genomic_DNA"/>
</dbReference>
<dbReference type="EMBL" id="DB102321">
    <property type="status" value="NOT_ANNOTATED_CDS"/>
    <property type="molecule type" value="mRNA"/>
</dbReference>
<dbReference type="EMBL" id="AF196779">
    <property type="status" value="NOT_ANNOTATED_CDS"/>
    <property type="molecule type" value="Genomic_DNA"/>
</dbReference>
<dbReference type="EMBL" id="BC109066">
    <property type="protein sequence ID" value="AAI09067.1"/>
    <property type="molecule type" value="mRNA"/>
</dbReference>
<dbReference type="CCDS" id="CCDS14319.1">
    <molecule id="Q04941-1"/>
</dbReference>
<dbReference type="PIR" id="S32567">
    <property type="entry name" value="S32567"/>
</dbReference>
<dbReference type="RefSeq" id="NP_002659.1">
    <molecule id="Q04941-1"/>
    <property type="nucleotide sequence ID" value="NM_002668.3"/>
</dbReference>
<dbReference type="SMR" id="Q04941"/>
<dbReference type="BioGRID" id="111369">
    <property type="interactions" value="115"/>
</dbReference>
<dbReference type="FunCoup" id="Q04941">
    <property type="interactions" value="343"/>
</dbReference>
<dbReference type="IntAct" id="Q04941">
    <property type="interactions" value="79"/>
</dbReference>
<dbReference type="MINT" id="Q04941"/>
<dbReference type="STRING" id="9606.ENSP00000365505"/>
<dbReference type="TCDB" id="1.A.64.5.2">
    <property type="family name" value="the plasmolipin (plasmolipin) family"/>
</dbReference>
<dbReference type="GlyCosmos" id="Q04941">
    <property type="glycosylation" value="2 sites, No reported glycans"/>
</dbReference>
<dbReference type="GlyGen" id="Q04941">
    <property type="glycosylation" value="5 sites, 2 O-linked glycans (3 sites)"/>
</dbReference>
<dbReference type="iPTMnet" id="Q04941"/>
<dbReference type="PhosphoSitePlus" id="Q04941"/>
<dbReference type="SwissPalm" id="Q04941"/>
<dbReference type="BioMuta" id="PLP2"/>
<dbReference type="DMDM" id="416563"/>
<dbReference type="jPOST" id="Q04941"/>
<dbReference type="MassIVE" id="Q04941"/>
<dbReference type="PaxDb" id="9606-ENSP00000365505"/>
<dbReference type="PeptideAtlas" id="Q04941"/>
<dbReference type="ProteomicsDB" id="58301">
    <molecule id="Q04941-1"/>
</dbReference>
<dbReference type="ProteomicsDB" id="58302">
    <molecule id="Q04941-2"/>
</dbReference>
<dbReference type="Pumba" id="Q04941"/>
<dbReference type="TopDownProteomics" id="Q04941-1">
    <molecule id="Q04941-1"/>
</dbReference>
<dbReference type="Antibodypedia" id="12063">
    <property type="antibodies" value="64 antibodies from 22 providers"/>
</dbReference>
<dbReference type="DNASU" id="5355"/>
<dbReference type="Ensembl" id="ENST00000376322.7">
    <molecule id="Q04941-2"/>
    <property type="protein sequence ID" value="ENSP00000365500.3"/>
    <property type="gene ID" value="ENSG00000102007.11"/>
</dbReference>
<dbReference type="Ensembl" id="ENST00000376327.6">
    <molecule id="Q04941-1"/>
    <property type="protein sequence ID" value="ENSP00000365505.5"/>
    <property type="gene ID" value="ENSG00000102007.11"/>
</dbReference>
<dbReference type="GeneID" id="5355"/>
<dbReference type="KEGG" id="hsa:5355"/>
<dbReference type="MANE-Select" id="ENST00000376327.6">
    <property type="protein sequence ID" value="ENSP00000365505.5"/>
    <property type="RefSeq nucleotide sequence ID" value="NM_002668.3"/>
    <property type="RefSeq protein sequence ID" value="NP_002659.1"/>
</dbReference>
<dbReference type="UCSC" id="uc004dmx.4">
    <molecule id="Q04941-1"/>
    <property type="organism name" value="human"/>
</dbReference>
<dbReference type="AGR" id="HGNC:9087"/>
<dbReference type="CTD" id="5355"/>
<dbReference type="DisGeNET" id="5355"/>
<dbReference type="GeneCards" id="PLP2"/>
<dbReference type="HGNC" id="HGNC:9087">
    <property type="gene designation" value="PLP2"/>
</dbReference>
<dbReference type="HPA" id="ENSG00000102007">
    <property type="expression patterns" value="Low tissue specificity"/>
</dbReference>
<dbReference type="MIM" id="300112">
    <property type="type" value="gene"/>
</dbReference>
<dbReference type="neXtProt" id="NX_Q04941"/>
<dbReference type="OpenTargets" id="ENSG00000102007"/>
<dbReference type="PharmGKB" id="PA33415"/>
<dbReference type="VEuPathDB" id="HostDB:ENSG00000102007"/>
<dbReference type="eggNOG" id="KOG4788">
    <property type="taxonomic scope" value="Eukaryota"/>
</dbReference>
<dbReference type="GeneTree" id="ENSGT00940000158528"/>
<dbReference type="HOGENOM" id="CLU_108546_4_0_1"/>
<dbReference type="InParanoid" id="Q04941"/>
<dbReference type="OMA" id="TNFWRTR"/>
<dbReference type="OrthoDB" id="9898022at2759"/>
<dbReference type="PAN-GO" id="Q04941">
    <property type="GO annotations" value="1 GO annotation based on evolutionary models"/>
</dbReference>
<dbReference type="PhylomeDB" id="Q04941"/>
<dbReference type="TreeFam" id="TF317387"/>
<dbReference type="PathwayCommons" id="Q04941"/>
<dbReference type="SignaLink" id="Q04941"/>
<dbReference type="BioGRID-ORCS" id="5355">
    <property type="hits" value="8 hits in 781 CRISPR screens"/>
</dbReference>
<dbReference type="ChiTaRS" id="PLP2">
    <property type="organism name" value="human"/>
</dbReference>
<dbReference type="GeneWiki" id="PLP2"/>
<dbReference type="GenomeRNAi" id="5355"/>
<dbReference type="Pharos" id="Q04941">
    <property type="development level" value="Tbio"/>
</dbReference>
<dbReference type="PRO" id="PR:Q04941"/>
<dbReference type="Proteomes" id="UP000005640">
    <property type="component" value="Chromosome X"/>
</dbReference>
<dbReference type="RNAct" id="Q04941">
    <property type="molecule type" value="protein"/>
</dbReference>
<dbReference type="Bgee" id="ENSG00000102007">
    <property type="expression patterns" value="Expressed in gingival epithelium and 187 other cell types or tissues"/>
</dbReference>
<dbReference type="ExpressionAtlas" id="Q04941">
    <property type="expression patterns" value="baseline and differential"/>
</dbReference>
<dbReference type="GO" id="GO:0005783">
    <property type="term" value="C:endoplasmic reticulum"/>
    <property type="evidence" value="ECO:0000304"/>
    <property type="project" value="ProtInc"/>
</dbReference>
<dbReference type="GO" id="GO:0005789">
    <property type="term" value="C:endoplasmic reticulum membrane"/>
    <property type="evidence" value="ECO:0000304"/>
    <property type="project" value="ProtInc"/>
</dbReference>
<dbReference type="GO" id="GO:0016020">
    <property type="term" value="C:membrane"/>
    <property type="evidence" value="ECO:0000318"/>
    <property type="project" value="GO_Central"/>
</dbReference>
<dbReference type="GO" id="GO:0005886">
    <property type="term" value="C:plasma membrane"/>
    <property type="evidence" value="ECO:0000314"/>
    <property type="project" value="UniProtKB"/>
</dbReference>
<dbReference type="GO" id="GO:0019956">
    <property type="term" value="F:chemokine binding"/>
    <property type="evidence" value="ECO:0000353"/>
    <property type="project" value="UniProtKB"/>
</dbReference>
<dbReference type="GO" id="GO:0015075">
    <property type="term" value="F:monoatomic ion transmembrane transporter activity"/>
    <property type="evidence" value="ECO:0000304"/>
    <property type="project" value="ProtInc"/>
</dbReference>
<dbReference type="GO" id="GO:0006935">
    <property type="term" value="P:chemotaxis"/>
    <property type="evidence" value="ECO:0000303"/>
    <property type="project" value="UniProtKB"/>
</dbReference>
<dbReference type="GO" id="GO:0019221">
    <property type="term" value="P:cytokine-mediated signaling pathway"/>
    <property type="evidence" value="ECO:0000303"/>
    <property type="project" value="UniProtKB"/>
</dbReference>
<dbReference type="GO" id="GO:0006811">
    <property type="term" value="P:monoatomic ion transport"/>
    <property type="evidence" value="ECO:0000304"/>
    <property type="project" value="ProtInc"/>
</dbReference>
<dbReference type="InterPro" id="IPR008253">
    <property type="entry name" value="Marvel"/>
</dbReference>
<dbReference type="InterPro" id="IPR050578">
    <property type="entry name" value="MARVEL-CKLF_proteins"/>
</dbReference>
<dbReference type="PANTHER" id="PTHR22776">
    <property type="entry name" value="MARVEL-CONTAINING POTENTIAL LIPID RAFT-ASSOCIATED PROTEIN"/>
    <property type="match status" value="1"/>
</dbReference>
<dbReference type="PANTHER" id="PTHR22776:SF4">
    <property type="entry name" value="PROTEOLIPID PROTEIN 2"/>
    <property type="match status" value="1"/>
</dbReference>
<dbReference type="Pfam" id="PF01284">
    <property type="entry name" value="MARVEL"/>
    <property type="match status" value="1"/>
</dbReference>
<dbReference type="PROSITE" id="PS51225">
    <property type="entry name" value="MARVEL"/>
    <property type="match status" value="1"/>
</dbReference>
<proteinExistence type="evidence at protein level"/>
<feature type="chain" id="PRO_0000156819" description="Proteolipid protein 2">
    <location>
        <begin position="1"/>
        <end position="152"/>
    </location>
</feature>
<feature type="transmembrane region" description="Helical" evidence="1">
    <location>
        <begin position="25"/>
        <end position="45"/>
    </location>
</feature>
<feature type="transmembrane region" description="Helical" evidence="1">
    <location>
        <begin position="48"/>
        <end position="68"/>
    </location>
</feature>
<feature type="transmembrane region" description="Helical" evidence="1">
    <location>
        <begin position="85"/>
        <end position="105"/>
    </location>
</feature>
<feature type="transmembrane region" description="Helical" evidence="1">
    <location>
        <begin position="112"/>
        <end position="132"/>
    </location>
</feature>
<feature type="domain" description="MARVEL" evidence="2">
    <location>
        <begin position="19"/>
        <end position="137"/>
    </location>
</feature>
<feature type="glycosylation site" description="N-linked (GlcNAc...) asparagine" evidence="1">
    <location>
        <position position="18"/>
    </location>
</feature>
<feature type="glycosylation site" description="N-linked (GlcNAc...) asparagine" evidence="1">
    <location>
        <position position="108"/>
    </location>
</feature>
<feature type="splice variant" id="VSP_041602" description="In isoform 2." evidence="3">
    <original>LGLIATCLFGYDAYVTFPVRQPRHTAAPTDPADGPV</original>
    <variation>KAMGAALKHRAKGLRSQGPFLPLLLAEIV</variation>
    <location>
        <begin position="117"/>
        <end position="152"/>
    </location>
</feature>
<feature type="sequence variant" id="VAR_011924" description="In dbSNP:rs1802969.">
    <original>A</original>
    <variation>S</variation>
    <location>
        <position position="91"/>
    </location>
</feature>